<name>PGFRA_TAKRU</name>
<organism>
    <name type="scientific">Takifugu rubripes</name>
    <name type="common">Japanese pufferfish</name>
    <name type="synonym">Fugu rubripes</name>
    <dbReference type="NCBI Taxonomy" id="31033"/>
    <lineage>
        <taxon>Eukaryota</taxon>
        <taxon>Metazoa</taxon>
        <taxon>Chordata</taxon>
        <taxon>Craniata</taxon>
        <taxon>Vertebrata</taxon>
        <taxon>Euteleostomi</taxon>
        <taxon>Actinopterygii</taxon>
        <taxon>Neopterygii</taxon>
        <taxon>Teleostei</taxon>
        <taxon>Neoteleostei</taxon>
        <taxon>Acanthomorphata</taxon>
        <taxon>Eupercaria</taxon>
        <taxon>Tetraodontiformes</taxon>
        <taxon>Tetradontoidea</taxon>
        <taxon>Tetraodontidae</taxon>
        <taxon>Takifugu</taxon>
    </lineage>
</organism>
<dbReference type="EC" id="2.7.10.1"/>
<dbReference type="EMBL" id="AF456419">
    <property type="protein sequence ID" value="AAN87554.1"/>
    <property type="molecule type" value="Genomic_DNA"/>
</dbReference>
<dbReference type="SMR" id="Q8AXC7"/>
<dbReference type="FunCoup" id="Q8AXC7">
    <property type="interactions" value="1169"/>
</dbReference>
<dbReference type="STRING" id="31033.ENSTRUP00000073047"/>
<dbReference type="GlyCosmos" id="Q8AXC7">
    <property type="glycosylation" value="7 sites, No reported glycans"/>
</dbReference>
<dbReference type="eggNOG" id="KOG0200">
    <property type="taxonomic scope" value="Eukaryota"/>
</dbReference>
<dbReference type="InParanoid" id="Q8AXC7"/>
<dbReference type="OrthoDB" id="535945at2759"/>
<dbReference type="Proteomes" id="UP000005226">
    <property type="component" value="Unplaced"/>
</dbReference>
<dbReference type="GO" id="GO:0005886">
    <property type="term" value="C:plasma membrane"/>
    <property type="evidence" value="ECO:0007669"/>
    <property type="project" value="UniProtKB-SubCell"/>
</dbReference>
<dbReference type="GO" id="GO:0043235">
    <property type="term" value="C:receptor complex"/>
    <property type="evidence" value="ECO:0007669"/>
    <property type="project" value="TreeGrafter"/>
</dbReference>
<dbReference type="GO" id="GO:0005524">
    <property type="term" value="F:ATP binding"/>
    <property type="evidence" value="ECO:0007669"/>
    <property type="project" value="UniProtKB-KW"/>
</dbReference>
<dbReference type="GO" id="GO:0005018">
    <property type="term" value="F:platelet-derived growth factor alpha-receptor activity"/>
    <property type="evidence" value="ECO:0007669"/>
    <property type="project" value="InterPro"/>
</dbReference>
<dbReference type="GO" id="GO:0048407">
    <property type="term" value="F:platelet-derived growth factor binding"/>
    <property type="evidence" value="ECO:0007669"/>
    <property type="project" value="TreeGrafter"/>
</dbReference>
<dbReference type="GO" id="GO:0006935">
    <property type="term" value="P:chemotaxis"/>
    <property type="evidence" value="ECO:0007669"/>
    <property type="project" value="UniProtKB-KW"/>
</dbReference>
<dbReference type="GO" id="GO:0048701">
    <property type="term" value="P:embryonic cranial skeleton morphogenesis"/>
    <property type="evidence" value="ECO:0007669"/>
    <property type="project" value="TreeGrafter"/>
</dbReference>
<dbReference type="FunFam" id="2.60.40.10:FF:000720">
    <property type="entry name" value="Platelet-derived growth factor receptor alpha"/>
    <property type="match status" value="1"/>
</dbReference>
<dbReference type="FunFam" id="3.30.200.20:FF:000025">
    <property type="entry name" value="Platelet-derived growth factor receptor alpha"/>
    <property type="match status" value="1"/>
</dbReference>
<dbReference type="FunFam" id="1.10.510.10:FF:000140">
    <property type="entry name" value="Platelet-derived growth factor receptor beta"/>
    <property type="match status" value="1"/>
</dbReference>
<dbReference type="FunFam" id="2.60.40.10:FF:000223">
    <property type="entry name" value="Platelet-derived growth factor receptor beta"/>
    <property type="match status" value="1"/>
</dbReference>
<dbReference type="Gene3D" id="2.60.40.10">
    <property type="entry name" value="Immunoglobulins"/>
    <property type="match status" value="5"/>
</dbReference>
<dbReference type="Gene3D" id="3.30.200.20">
    <property type="entry name" value="Phosphorylase Kinase, domain 1"/>
    <property type="match status" value="1"/>
</dbReference>
<dbReference type="Gene3D" id="1.10.510.10">
    <property type="entry name" value="Transferase(Phosphotransferase) domain 1"/>
    <property type="match status" value="1"/>
</dbReference>
<dbReference type="InterPro" id="IPR007110">
    <property type="entry name" value="Ig-like_dom"/>
</dbReference>
<dbReference type="InterPro" id="IPR036179">
    <property type="entry name" value="Ig-like_dom_sf"/>
</dbReference>
<dbReference type="InterPro" id="IPR013783">
    <property type="entry name" value="Ig-like_fold"/>
</dbReference>
<dbReference type="InterPro" id="IPR013098">
    <property type="entry name" value="Ig_I-set"/>
</dbReference>
<dbReference type="InterPro" id="IPR003599">
    <property type="entry name" value="Ig_sub"/>
</dbReference>
<dbReference type="InterPro" id="IPR003598">
    <property type="entry name" value="Ig_sub2"/>
</dbReference>
<dbReference type="InterPro" id="IPR013151">
    <property type="entry name" value="Immunoglobulin_dom"/>
</dbReference>
<dbReference type="InterPro" id="IPR011009">
    <property type="entry name" value="Kinase-like_dom_sf"/>
</dbReference>
<dbReference type="InterPro" id="IPR027290">
    <property type="entry name" value="PDGFRA"/>
</dbReference>
<dbReference type="InterPro" id="IPR000719">
    <property type="entry name" value="Prot_kinase_dom"/>
</dbReference>
<dbReference type="InterPro" id="IPR017441">
    <property type="entry name" value="Protein_kinase_ATP_BS"/>
</dbReference>
<dbReference type="InterPro" id="IPR050122">
    <property type="entry name" value="RTK"/>
</dbReference>
<dbReference type="InterPro" id="IPR001245">
    <property type="entry name" value="Ser-Thr/Tyr_kinase_cat_dom"/>
</dbReference>
<dbReference type="InterPro" id="IPR008266">
    <property type="entry name" value="Tyr_kinase_AS"/>
</dbReference>
<dbReference type="InterPro" id="IPR020635">
    <property type="entry name" value="Tyr_kinase_cat_dom"/>
</dbReference>
<dbReference type="InterPro" id="IPR001824">
    <property type="entry name" value="Tyr_kinase_rcpt_3_CS"/>
</dbReference>
<dbReference type="PANTHER" id="PTHR24416:SF52">
    <property type="entry name" value="PLATELET-DERIVED GROWTH FACTOR RECEPTOR ALPHA"/>
    <property type="match status" value="1"/>
</dbReference>
<dbReference type="PANTHER" id="PTHR24416">
    <property type="entry name" value="TYROSINE-PROTEIN KINASE RECEPTOR"/>
    <property type="match status" value="1"/>
</dbReference>
<dbReference type="Pfam" id="PF07679">
    <property type="entry name" value="I-set"/>
    <property type="match status" value="1"/>
</dbReference>
<dbReference type="Pfam" id="PF00047">
    <property type="entry name" value="ig"/>
    <property type="match status" value="1"/>
</dbReference>
<dbReference type="Pfam" id="PF25305">
    <property type="entry name" value="Ig_PDGFR_d4"/>
    <property type="match status" value="1"/>
</dbReference>
<dbReference type="Pfam" id="PF07714">
    <property type="entry name" value="PK_Tyr_Ser-Thr"/>
    <property type="match status" value="1"/>
</dbReference>
<dbReference type="PIRSF" id="PIRSF500950">
    <property type="entry name" value="Alpha-PDGF_receptor"/>
    <property type="match status" value="1"/>
</dbReference>
<dbReference type="PIRSF" id="PIRSF000615">
    <property type="entry name" value="TyrPK_CSF1-R"/>
    <property type="match status" value="1"/>
</dbReference>
<dbReference type="PRINTS" id="PR01832">
    <property type="entry name" value="VEGFRECEPTOR"/>
</dbReference>
<dbReference type="SMART" id="SM00409">
    <property type="entry name" value="IG"/>
    <property type="match status" value="3"/>
</dbReference>
<dbReference type="SMART" id="SM00408">
    <property type="entry name" value="IGc2"/>
    <property type="match status" value="3"/>
</dbReference>
<dbReference type="SMART" id="SM00219">
    <property type="entry name" value="TyrKc"/>
    <property type="match status" value="1"/>
</dbReference>
<dbReference type="SUPFAM" id="SSF48726">
    <property type="entry name" value="Immunoglobulin"/>
    <property type="match status" value="3"/>
</dbReference>
<dbReference type="SUPFAM" id="SSF56112">
    <property type="entry name" value="Protein kinase-like (PK-like)"/>
    <property type="match status" value="1"/>
</dbReference>
<dbReference type="PROSITE" id="PS50835">
    <property type="entry name" value="IG_LIKE"/>
    <property type="match status" value="2"/>
</dbReference>
<dbReference type="PROSITE" id="PS00107">
    <property type="entry name" value="PROTEIN_KINASE_ATP"/>
    <property type="match status" value="1"/>
</dbReference>
<dbReference type="PROSITE" id="PS50011">
    <property type="entry name" value="PROTEIN_KINASE_DOM"/>
    <property type="match status" value="1"/>
</dbReference>
<dbReference type="PROSITE" id="PS00109">
    <property type="entry name" value="PROTEIN_KINASE_TYR"/>
    <property type="match status" value="1"/>
</dbReference>
<dbReference type="PROSITE" id="PS00240">
    <property type="entry name" value="RECEPTOR_TYR_KIN_III"/>
    <property type="match status" value="1"/>
</dbReference>
<feature type="signal peptide" evidence="2">
    <location>
        <begin position="1"/>
        <end position="27"/>
    </location>
</feature>
<feature type="chain" id="PRO_0000248885" description="Platelet-derived growth factor receptor alpha">
    <location>
        <begin position="28"/>
        <end position="1062"/>
    </location>
</feature>
<feature type="topological domain" description="Extracellular" evidence="2">
    <location>
        <begin position="28"/>
        <end position="504"/>
    </location>
</feature>
<feature type="transmembrane region" description="Helical" evidence="2">
    <location>
        <begin position="505"/>
        <end position="525"/>
    </location>
</feature>
<feature type="topological domain" description="Cytoplasmic" evidence="2">
    <location>
        <begin position="526"/>
        <end position="1062"/>
    </location>
</feature>
<feature type="domain" description="Ig-like C2-type 1">
    <location>
        <begin position="28"/>
        <end position="96"/>
    </location>
</feature>
<feature type="domain" description="Ig-like C2-type 2">
    <location>
        <begin position="91"/>
        <end position="184"/>
    </location>
</feature>
<feature type="domain" description="Ig-like C2-type 3">
    <location>
        <begin position="190"/>
        <end position="281"/>
    </location>
</feature>
<feature type="domain" description="Ig-like C2-type 4">
    <location>
        <begin position="287"/>
        <end position="381"/>
    </location>
</feature>
<feature type="domain" description="Ig-like C2-type 5">
    <location>
        <begin position="389"/>
        <end position="493"/>
    </location>
</feature>
<feature type="domain" description="Protein kinase" evidence="4">
    <location>
        <begin position="569"/>
        <end position="945"/>
    </location>
</feature>
<feature type="region of interest" description="Disordered" evidence="6">
    <location>
        <begin position="734"/>
        <end position="754"/>
    </location>
</feature>
<feature type="region of interest" description="Disordered" evidence="6">
    <location>
        <begin position="975"/>
        <end position="1034"/>
    </location>
</feature>
<feature type="compositionally biased region" description="Basic and acidic residues" evidence="6">
    <location>
        <begin position="975"/>
        <end position="986"/>
    </location>
</feature>
<feature type="compositionally biased region" description="Polar residues" evidence="6">
    <location>
        <begin position="1014"/>
        <end position="1032"/>
    </location>
</feature>
<feature type="active site" description="Proton acceptor" evidence="4 5">
    <location>
        <position position="793"/>
    </location>
</feature>
<feature type="binding site" evidence="4">
    <location>
        <begin position="575"/>
        <end position="583"/>
    </location>
    <ligand>
        <name>ATP</name>
        <dbReference type="ChEBI" id="CHEBI:30616"/>
    </ligand>
</feature>
<feature type="binding site" evidence="4">
    <location>
        <position position="603"/>
    </location>
    <ligand>
        <name>ATP</name>
        <dbReference type="ChEBI" id="CHEBI:30616"/>
    </ligand>
</feature>
<feature type="modified residue" description="Phosphotyrosine; by autocatalysis" evidence="1">
    <location>
        <position position="548"/>
    </location>
</feature>
<feature type="modified residue" description="Phosphotyrosine; by autocatalysis" evidence="1">
    <location>
        <position position="550"/>
    </location>
</feature>
<feature type="modified residue" description="Phosphotyrosine; by autocatalysis" evidence="1">
    <location>
        <position position="697"/>
    </location>
</feature>
<feature type="modified residue" description="Phosphotyrosine; by autocatalysis" evidence="1">
    <location>
        <position position="708"/>
    </location>
</feature>
<feature type="modified residue" description="Phosphotyrosine; by autocatalysis" evidence="1">
    <location>
        <position position="719"/>
    </location>
</feature>
<feature type="modified residue" description="Phosphotyrosine; by autocatalysis" evidence="1">
    <location>
        <position position="731"/>
    </location>
</feature>
<feature type="modified residue" description="Phosphotyrosine; by autocatalysis" evidence="1">
    <location>
        <position position="739"/>
    </location>
</feature>
<feature type="modified residue" description="Phosphotyrosine; by autocatalysis" evidence="1">
    <location>
        <position position="824"/>
    </location>
</feature>
<feature type="modified residue" description="Phosphotyrosine; by autocatalysis" evidence="1">
    <location>
        <position position="963"/>
    </location>
</feature>
<feature type="modified residue" description="Phosphotyrosine; by autocatalysis" evidence="1">
    <location>
        <position position="992"/>
    </location>
</feature>
<feature type="glycosylation site" description="N-linked (GlcNAc...) asparagine" evidence="2">
    <location>
        <position position="79"/>
    </location>
</feature>
<feature type="glycosylation site" description="N-linked (GlcNAc...) asparagine" evidence="2">
    <location>
        <position position="132"/>
    </location>
</feature>
<feature type="glycosylation site" description="N-linked (GlcNAc...) asparagine" evidence="2">
    <location>
        <position position="273"/>
    </location>
</feature>
<feature type="glycosylation site" description="N-linked (GlcNAc...) asparagine" evidence="2">
    <location>
        <position position="333"/>
    </location>
</feature>
<feature type="glycosylation site" description="N-linked (GlcNAc...) asparagine" evidence="2">
    <location>
        <position position="366"/>
    </location>
</feature>
<feature type="glycosylation site" description="N-linked (GlcNAc...) asparagine" evidence="2">
    <location>
        <position position="433"/>
    </location>
</feature>
<feature type="glycosylation site" description="N-linked (GlcNAc...) asparagine" evidence="2">
    <location>
        <position position="444"/>
    </location>
</feature>
<feature type="disulfide bond" evidence="3">
    <location>
        <begin position="29"/>
        <end position="74"/>
    </location>
</feature>
<feature type="disulfide bond" evidence="3">
    <location>
        <begin position="124"/>
        <end position="165"/>
    </location>
</feature>
<feature type="disulfide bond" evidence="3">
    <location>
        <begin position="211"/>
        <end position="265"/>
    </location>
</feature>
<feature type="disulfide bond" evidence="3">
    <location>
        <begin position="410"/>
        <end position="477"/>
    </location>
</feature>
<keyword id="KW-0067">ATP-binding</keyword>
<keyword id="KW-1003">Cell membrane</keyword>
<keyword id="KW-0145">Chemotaxis</keyword>
<keyword id="KW-0217">Developmental protein</keyword>
<keyword id="KW-1015">Disulfide bond</keyword>
<keyword id="KW-0325">Glycoprotein</keyword>
<keyword id="KW-0393">Immunoglobulin domain</keyword>
<keyword id="KW-0418">Kinase</keyword>
<keyword id="KW-0472">Membrane</keyword>
<keyword id="KW-0547">Nucleotide-binding</keyword>
<keyword id="KW-0597">Phosphoprotein</keyword>
<keyword id="KW-0675">Receptor</keyword>
<keyword id="KW-1185">Reference proteome</keyword>
<keyword id="KW-0677">Repeat</keyword>
<keyword id="KW-0732">Signal</keyword>
<keyword id="KW-0808">Transferase</keyword>
<keyword id="KW-0812">Transmembrane</keyword>
<keyword id="KW-1133">Transmembrane helix</keyword>
<keyword id="KW-0829">Tyrosine-protein kinase</keyword>
<keyword id="KW-0832">Ubl conjugation</keyword>
<proteinExistence type="inferred from homology"/>
<protein>
    <recommendedName>
        <fullName>Platelet-derived growth factor receptor alpha</fullName>
        <shortName>PDGF-R-alpha</shortName>
        <shortName>PDGFR-alpha</shortName>
        <ecNumber>2.7.10.1</ecNumber>
    </recommendedName>
    <alternativeName>
        <fullName>Alpha platelet-derived growth factor receptor</fullName>
    </alternativeName>
    <alternativeName>
        <fullName>Alpha-type platelet-derived growth factor receptor</fullName>
    </alternativeName>
</protein>
<gene>
    <name type="primary">pdgfra</name>
</gene>
<evidence type="ECO:0000250" key="1"/>
<evidence type="ECO:0000255" key="2"/>
<evidence type="ECO:0000255" key="3">
    <source>
        <dbReference type="PROSITE-ProRule" id="PRU00114"/>
    </source>
</evidence>
<evidence type="ECO:0000255" key="4">
    <source>
        <dbReference type="PROSITE-ProRule" id="PRU00159"/>
    </source>
</evidence>
<evidence type="ECO:0000255" key="5">
    <source>
        <dbReference type="PROSITE-ProRule" id="PRU10028"/>
    </source>
</evidence>
<evidence type="ECO:0000256" key="6">
    <source>
        <dbReference type="SAM" id="MobiDB-lite"/>
    </source>
</evidence>
<comment type="function">
    <text evidence="1">Tyrosine-protein kinase that acts as a cell-surface receptor for pdgfa, pdgfb and pdgfc and plays an essential role in the regulation of embryonic development, cell proliferation, survival and chemotaxis. Depending on the context, promotes or inhibits cell proliferation and cell migration. Plays an important role in the differentiation of bone marrow-derived mesenchymal stem cells. Required for normal skeleton development. Required for normal development of the gastrointestinal tract. Plays a role in cell migration and chemotaxis in wound healing. Plays a role in platelet activation, secretion of agonists from platelet granules, and in thrombin-induced platelet aggregation. Binding of its cognate ligands - homodimeric pdgfa, homodimeric pdgfb, heterodimers formed by pdgfa and pdgfb or homodimeric pdgfc -leads to the activation of several signaling cascades; the response depends on the nature of the bound ligand and is modulated by the formation of heterodimers between pdgfra and pdgfrb. Phosphorylates pik3r1, plcg1, and ptpn11. Activation of plcg1 leads to the production of the cellular signaling molecules diacylglycerol and inositol 1,4,5-trisphosphate, mobilization of cytosolic Ca(2+) and the activation of protein kinase C. Phosphorylates pik3r1, the regulatory subunit of phosphatidylinositol 3-kinase, and thereby mediates activation of the AKT1 signaling pathway. Mediates activation of hras and of the MAP kinases mapk1/erk2 and/or mapk3/erk1. Promotes activation of STAT family members stat1, stat3 and stat5a and/or stat5b. Receptor signaling is down-regulated by protein phosphatases that dephosphorylate the receptor and its down-stream effectors, and by rapid internalization of the activated receptor (By similarity).</text>
</comment>
<comment type="catalytic activity">
    <reaction evidence="5">
        <text>L-tyrosyl-[protein] + ATP = O-phospho-L-tyrosyl-[protein] + ADP + H(+)</text>
        <dbReference type="Rhea" id="RHEA:10596"/>
        <dbReference type="Rhea" id="RHEA-COMP:10136"/>
        <dbReference type="Rhea" id="RHEA-COMP:20101"/>
        <dbReference type="ChEBI" id="CHEBI:15378"/>
        <dbReference type="ChEBI" id="CHEBI:30616"/>
        <dbReference type="ChEBI" id="CHEBI:46858"/>
        <dbReference type="ChEBI" id="CHEBI:61978"/>
        <dbReference type="ChEBI" id="CHEBI:456216"/>
        <dbReference type="EC" id="2.7.10.1"/>
    </reaction>
</comment>
<comment type="activity regulation">
    <text evidence="1">Present in an inactive conformation in the absence of bound ligand. Binding of pdgfa and/or pdgfb leads to dimerization and activation by autophosphorylation on tyrosine residues (By similarity).</text>
</comment>
<comment type="subunit">
    <text evidence="1">Interacts with homodimeric pdgfa, pdgfb and pdgfc, and with heterodimers formed by pdgfa and pdgfb. monomer in the absence of bound ligand. Interaction with dimeric pdgfa, pdgfb and/or pdgfc leads to receptor dimerization, where both pdgfra homodimers and heterodimers with pdgfrb are observed (By similarity).</text>
</comment>
<comment type="subcellular location">
    <subcellularLocation>
        <location evidence="1">Cell membrane</location>
        <topology evidence="1">Single-pass type I membrane protein</topology>
    </subcellularLocation>
    <text evidence="1">The activated receptor is rapidly internalized and degraded.</text>
</comment>
<comment type="PTM">
    <text evidence="1">Ubiquitinated, leading to its degradation.</text>
</comment>
<comment type="PTM">
    <text evidence="1">Autophosphorylated on tyrosine residues upon ligand binding. Autophosphorylation occurs in trans, i.e. one subunit of the dimeric receptor phosphorylates tyrosine residues on the other subunit (By similarity).</text>
</comment>
<comment type="similarity">
    <text evidence="4">Belongs to the protein kinase superfamily. Tyr protein kinase family. CSF-1/PDGF receptor subfamily.</text>
</comment>
<reference key="1">
    <citation type="journal article" date="2002" name="DNA Seq.">
        <title>Characterization of the platelet-derived growth factor receptor alpha and c-kit genes in the pufferfish Fugu rubripes.</title>
        <authorList>
            <person name="Williams H."/>
            <person name="Brenner S."/>
            <person name="Venkatesh B."/>
        </authorList>
    </citation>
    <scope>NUCLEOTIDE SEQUENCE [GENOMIC DNA]</scope>
</reference>
<accession>Q8AXC7</accession>
<sequence>MFPPSSAPLLLPQLEELVVPLHTAFTLTCQGEATIAWDVPLDVPEKTQEDNSGLFVTTISVDSASAMHTGYYRCFYRRNATEDADEAMQSIYVYVPDPDVPFVPLVVPFGNHVLSDHEEMEIQCRVSDPSANVTLINVDTQQPVPCMYDSKRGALGVFTAGTYVCKGVVNGAEHYSEDYIVHGWIGGSGLHVELTAKHTVLLVGDTITVNCLAQGSEILEDHWKYPGKVANRAIKTVHENKKDQEILYTLTVPQASVKDTGIYSCSITDVVTNMSQTKQIAIRVYASEFMSIQPKFGEYESAELDEVCEFRAEITSFPTASVTWFKDSVPLSNVTAEISTSLQKLSETSYMSVLTLIRAKEEDSGNYTMRVKNGDQSRTVSLILEVKVPAVIVDLMDIHHGSATGQSVVCITRGQPTPLVEWFVCKNIKHCANDTSSWVPLPVNSTEVTMDSRFDEDNNLETQVIFGHLENTLAVRCLARNEMAAVSREIKLVSNGPHPELTVAAAVLVLLVIVIISLIVLVVIWKQKPRYEIRWRVIESVSPDGHEYIYVDPMQLPYDSRWEFPRDRLVLGRILGSGAFGKVVEGTAYGLSRSQPVMKVAVKMLKPTARSSEKQALMSELKIMTHLGPHLNIVNLLGACTKSGPIYIITEYCFYGDLVNYLHKNRESFLNPKPEKSNKKELDIFGINPADESSRSYVILSFESKGDYMDMKQADNTQYVPMLEISNASKYSDLQGSNYDHPPSQKGSNDGEMDQLLSDNMSEGLTTNDLLSFTYQVAKGMEFLASKNCVHRDLAARNVLLSQGKIVKICDFGLARDIMHDNNYVSKGSTFLPVKWMAPESIFDNLYTTLSDVWSYGILLWEIFSLGGTPYPGMIVDSSFYNKIKSGYRMSKPEHAPQDVYDMMMKCWNSEPEKRPSFLGLSDTIASLLPSSYKRHYERVNHEFLKSDHPAVTRVCVDNDDAYIGITYKNQGKLKDRESGFDEQRLSSDSGYIIPLPDLDPISDEEYGKRNRHSSQTSEESAIETGSSSSTFAKREGETLEDITLLDEMCLDCSDLVEDSFL</sequence>